<feature type="transit peptide" description="Mitochondrion" evidence="2">
    <location>
        <begin position="1"/>
        <end status="unknown"/>
    </location>
</feature>
<feature type="chain" id="PRO_0000289236" description="5-cytosine rRNA methyltransferase NSUN4">
    <location>
        <begin status="unknown"/>
        <end position="406"/>
    </location>
</feature>
<feature type="active site" description="Nucleophile" evidence="3">
    <location>
        <position position="332"/>
    </location>
</feature>
<feature type="binding site" evidence="2">
    <location>
        <position position="207"/>
    </location>
    <ligand>
        <name>S-adenosyl-L-methionine</name>
        <dbReference type="ChEBI" id="CHEBI:59789"/>
    </ligand>
</feature>
<feature type="binding site" evidence="2">
    <location>
        <position position="208"/>
    </location>
    <ligand>
        <name>S-adenosyl-L-methionine</name>
        <dbReference type="ChEBI" id="CHEBI:59789"/>
    </ligand>
</feature>
<feature type="binding site" evidence="2">
    <location>
        <position position="209"/>
    </location>
    <ligand>
        <name>S-adenosyl-L-methionine</name>
        <dbReference type="ChEBI" id="CHEBI:59789"/>
    </ligand>
</feature>
<feature type="binding site" evidence="2">
    <location>
        <position position="226"/>
    </location>
    <ligand>
        <name>S-adenosyl-L-methionine</name>
        <dbReference type="ChEBI" id="CHEBI:59789"/>
    </ligand>
</feature>
<feature type="binding site" evidence="2">
    <location>
        <position position="231"/>
    </location>
    <ligand>
        <name>S-adenosyl-L-methionine</name>
        <dbReference type="ChEBI" id="CHEBI:59789"/>
    </ligand>
</feature>
<feature type="binding site" evidence="2 3">
    <location>
        <position position="259"/>
    </location>
    <ligand>
        <name>S-adenosyl-L-methionine</name>
        <dbReference type="ChEBI" id="CHEBI:59789"/>
    </ligand>
</feature>
<feature type="binding site" evidence="2">
    <location>
        <position position="260"/>
    </location>
    <ligand>
        <name>S-adenosyl-L-methionine</name>
        <dbReference type="ChEBI" id="CHEBI:59789"/>
    </ligand>
</feature>
<feature type="binding site" evidence="3">
    <location>
        <position position="277"/>
    </location>
    <ligand>
        <name>S-adenosyl-L-methionine</name>
        <dbReference type="ChEBI" id="CHEBI:59789"/>
    </ligand>
</feature>
<comment type="function">
    <text evidence="2">Mitochondrial RNA cytosine C(5)-methyltransferase that methylates cytosine to 5-methylcytosine (m5C) in various RNAs, such as rRNAs, mRNAs and some long non-coding RNAs (lncRNAs) (By similarity). Involved in mitochondrial ribosome small subunit (SSU) maturation by catalyzing methylation of mitochondrial 12S rRNA (By similarity).</text>
</comment>
<comment type="catalytic activity">
    <reaction evidence="2">
        <text>a cytidine in rRNA + S-adenosyl-L-methionine = a 5-methylcytidine in rRNA + S-adenosyl-L-homocysteine + H(+)</text>
        <dbReference type="Rhea" id="RHEA:61484"/>
        <dbReference type="Rhea" id="RHEA-COMP:15836"/>
        <dbReference type="Rhea" id="RHEA-COMP:15837"/>
        <dbReference type="ChEBI" id="CHEBI:15378"/>
        <dbReference type="ChEBI" id="CHEBI:57856"/>
        <dbReference type="ChEBI" id="CHEBI:59789"/>
        <dbReference type="ChEBI" id="CHEBI:74483"/>
        <dbReference type="ChEBI" id="CHEBI:82748"/>
    </reaction>
</comment>
<comment type="catalytic activity">
    <reaction evidence="2">
        <text>a cytidine in mRNA + S-adenosyl-L-methionine = a 5-methylcytidine in mRNA + S-adenosyl-L-homocysteine + H(+)</text>
        <dbReference type="Rhea" id="RHEA:61464"/>
        <dbReference type="Rhea" id="RHEA-COMP:15145"/>
        <dbReference type="Rhea" id="RHEA-COMP:15826"/>
        <dbReference type="ChEBI" id="CHEBI:15378"/>
        <dbReference type="ChEBI" id="CHEBI:57856"/>
        <dbReference type="ChEBI" id="CHEBI:59789"/>
        <dbReference type="ChEBI" id="CHEBI:74483"/>
        <dbReference type="ChEBI" id="CHEBI:82748"/>
    </reaction>
</comment>
<comment type="subcellular location">
    <subcellularLocation>
        <location evidence="2">Mitochondrion</location>
    </subcellularLocation>
</comment>
<comment type="similarity">
    <text evidence="3">Belongs to the class I-like SAM-binding methyltransferase superfamily. RsmB/NOP family.</text>
</comment>
<reference key="1">
    <citation type="submission" date="2004-12" db="EMBL/GenBank/DDBJ databases">
        <authorList>
            <consortium name="NIH - Xenopus Gene Collection (XGC) project"/>
        </authorList>
    </citation>
    <scope>NUCLEOTIDE SEQUENCE [LARGE SCALE MRNA]</scope>
    <source>
        <tissue>Testis</tissue>
    </source>
</reference>
<protein>
    <recommendedName>
        <fullName>5-cytosine rRNA methyltransferase NSUN4</fullName>
        <ecNumber evidence="1">2.1.1.-</ecNumber>
    </recommendedName>
    <alternativeName>
        <fullName evidence="4">5-cytosine tRNA methyltransferase NSUN4</fullName>
        <ecNumber evidence="1">2.1.1.-</ecNumber>
    </alternativeName>
    <alternativeName>
        <fullName>NOL1/NOP2/Sun domain family member 4</fullName>
    </alternativeName>
</protein>
<name>NSUN4_XENLA</name>
<accession>Q5M7E3</accession>
<proteinExistence type="evidence at transcript level"/>
<evidence type="ECO:0000250" key="1">
    <source>
        <dbReference type="UniProtKB" id="Q95XR2"/>
    </source>
</evidence>
<evidence type="ECO:0000250" key="2">
    <source>
        <dbReference type="UniProtKB" id="Q96CB9"/>
    </source>
</evidence>
<evidence type="ECO:0000255" key="3">
    <source>
        <dbReference type="PROSITE-ProRule" id="PRU01023"/>
    </source>
</evidence>
<evidence type="ECO:0000305" key="4"/>
<keyword id="KW-0489">Methyltransferase</keyword>
<keyword id="KW-0496">Mitochondrion</keyword>
<keyword id="KW-1185">Reference proteome</keyword>
<keyword id="KW-0694">RNA-binding</keyword>
<keyword id="KW-0698">rRNA processing</keyword>
<keyword id="KW-0949">S-adenosyl-L-methionine</keyword>
<keyword id="KW-0808">Transferase</keyword>
<keyword id="KW-0809">Transit peptide</keyword>
<gene>
    <name type="primary">nsun4</name>
</gene>
<sequence length="406" mass="46061">MSACRGFLLRRINDSCLTFRRHKFKKKWATTLPKIPCSRLALQYFDINYSMQFGDLWPSIRISLLTEQKYGALVNNFSHKETVLNNLSALKAKDFISEAQSVISLLQTQNNVDTSEKMVFTEVPLNLVGEKNDAEQTQATNLLSSLSNSKLTCFTFSRGDISRFPQSRSDCFGLLEYYLMDAASLLPVLALDIQHGHSVLDLCAAPGGKTLALLQTENCQYLAANDLSTSRSSRLHRVLHSYVPRDQRAEHKVRITSWDGRLWGDLEASTYDRVLVDVPCTTDRHSLLEEENNIFHRIRTKQRQMLPLLQTELLVSGLRAVRPGGEVVYSTCSLSQLQNECVVQRAIELAATDHGVLVKPQDLSCFREVFKNTFNFFQDCRVGELVVPHLTANFGPMFFCKLLRIK</sequence>
<dbReference type="EC" id="2.1.1.-" evidence="1"/>
<dbReference type="EMBL" id="BC088687">
    <property type="protein sequence ID" value="AAH88687.1"/>
    <property type="molecule type" value="mRNA"/>
</dbReference>
<dbReference type="RefSeq" id="NP_001088881.1">
    <property type="nucleotide sequence ID" value="NM_001095412.1"/>
</dbReference>
<dbReference type="SMR" id="Q5M7E3"/>
<dbReference type="DNASU" id="496225"/>
<dbReference type="GeneID" id="496225"/>
<dbReference type="KEGG" id="xla:496225"/>
<dbReference type="AGR" id="Xenbase:XB-GENE-948194"/>
<dbReference type="CTD" id="496225"/>
<dbReference type="Xenbase" id="XB-GENE-948194">
    <property type="gene designation" value="nsun4.S"/>
</dbReference>
<dbReference type="OrthoDB" id="8020218at2759"/>
<dbReference type="Proteomes" id="UP000186698">
    <property type="component" value="Chromosome 4S"/>
</dbReference>
<dbReference type="Bgee" id="496225">
    <property type="expression patterns" value="Expressed in testis and 20 other cell types or tissues"/>
</dbReference>
<dbReference type="GO" id="GO:0005762">
    <property type="term" value="C:mitochondrial large ribosomal subunit"/>
    <property type="evidence" value="ECO:0007669"/>
    <property type="project" value="TreeGrafter"/>
</dbReference>
<dbReference type="GO" id="GO:0005759">
    <property type="term" value="C:mitochondrial matrix"/>
    <property type="evidence" value="ECO:0000250"/>
    <property type="project" value="UniProtKB"/>
</dbReference>
<dbReference type="GO" id="GO:0062152">
    <property type="term" value="F:mRNA (cytidine-5-)-methyltransferase activity"/>
    <property type="evidence" value="ECO:0000250"/>
    <property type="project" value="UniProtKB"/>
</dbReference>
<dbReference type="GO" id="GO:0003723">
    <property type="term" value="F:RNA binding"/>
    <property type="evidence" value="ECO:0007669"/>
    <property type="project" value="UniProtKB-KW"/>
</dbReference>
<dbReference type="GO" id="GO:0000957">
    <property type="term" value="P:mitochondrial RNA catabolic process"/>
    <property type="evidence" value="ECO:0000250"/>
    <property type="project" value="UniProtKB"/>
</dbReference>
<dbReference type="GO" id="GO:0031167">
    <property type="term" value="P:rRNA methylation"/>
    <property type="evidence" value="ECO:0007669"/>
    <property type="project" value="TreeGrafter"/>
</dbReference>
<dbReference type="CDD" id="cd02440">
    <property type="entry name" value="AdoMet_MTases"/>
    <property type="match status" value="1"/>
</dbReference>
<dbReference type="FunFam" id="3.40.50.150:FF:000055">
    <property type="entry name" value="5-methylcytosine rRNA methyltransferase NSUN4"/>
    <property type="match status" value="1"/>
</dbReference>
<dbReference type="Gene3D" id="6.20.240.40">
    <property type="match status" value="1"/>
</dbReference>
<dbReference type="Gene3D" id="3.40.50.150">
    <property type="entry name" value="Vaccinia Virus protein VP39"/>
    <property type="match status" value="1"/>
</dbReference>
<dbReference type="InterPro" id="IPR049560">
    <property type="entry name" value="MeTrfase_RsmB-F_NOP2_cat"/>
</dbReference>
<dbReference type="InterPro" id="IPR001678">
    <property type="entry name" value="MeTrfase_RsmB-F_NOP2_dom"/>
</dbReference>
<dbReference type="InterPro" id="IPR023267">
    <property type="entry name" value="RCMT"/>
</dbReference>
<dbReference type="InterPro" id="IPR029063">
    <property type="entry name" value="SAM-dependent_MTases_sf"/>
</dbReference>
<dbReference type="PANTHER" id="PTHR22808:SF3">
    <property type="entry name" value="5-METHYLCYTOSINE RRNA METHYLTRANSFERASE NSUN4"/>
    <property type="match status" value="1"/>
</dbReference>
<dbReference type="PANTHER" id="PTHR22808">
    <property type="entry name" value="NCL1 YEAST -RELATED NOL1/NOP2/FMU SUN DOMAIN-CONTAINING"/>
    <property type="match status" value="1"/>
</dbReference>
<dbReference type="Pfam" id="PF01189">
    <property type="entry name" value="Methyltr_RsmB-F"/>
    <property type="match status" value="1"/>
</dbReference>
<dbReference type="PRINTS" id="PR02008">
    <property type="entry name" value="RCMTFAMILY"/>
</dbReference>
<dbReference type="SUPFAM" id="SSF53335">
    <property type="entry name" value="S-adenosyl-L-methionine-dependent methyltransferases"/>
    <property type="match status" value="1"/>
</dbReference>
<dbReference type="PROSITE" id="PS51686">
    <property type="entry name" value="SAM_MT_RSMB_NOP"/>
    <property type="match status" value="1"/>
</dbReference>
<organism>
    <name type="scientific">Xenopus laevis</name>
    <name type="common">African clawed frog</name>
    <dbReference type="NCBI Taxonomy" id="8355"/>
    <lineage>
        <taxon>Eukaryota</taxon>
        <taxon>Metazoa</taxon>
        <taxon>Chordata</taxon>
        <taxon>Craniata</taxon>
        <taxon>Vertebrata</taxon>
        <taxon>Euteleostomi</taxon>
        <taxon>Amphibia</taxon>
        <taxon>Batrachia</taxon>
        <taxon>Anura</taxon>
        <taxon>Pipoidea</taxon>
        <taxon>Pipidae</taxon>
        <taxon>Xenopodinae</taxon>
        <taxon>Xenopus</taxon>
        <taxon>Xenopus</taxon>
    </lineage>
</organism>